<protein>
    <recommendedName>
        <fullName evidence="1">GTPase Era</fullName>
    </recommendedName>
</protein>
<organism>
    <name type="scientific">Rickettsia bellii (strain OSU 85-389)</name>
    <dbReference type="NCBI Taxonomy" id="391896"/>
    <lineage>
        <taxon>Bacteria</taxon>
        <taxon>Pseudomonadati</taxon>
        <taxon>Pseudomonadota</taxon>
        <taxon>Alphaproteobacteria</taxon>
        <taxon>Rickettsiales</taxon>
        <taxon>Rickettsiaceae</taxon>
        <taxon>Rickettsieae</taxon>
        <taxon>Rickettsia</taxon>
        <taxon>belli group</taxon>
    </lineage>
</organism>
<name>ERA_RICB8</name>
<accession>A8GUZ8</accession>
<keyword id="KW-0997">Cell inner membrane</keyword>
<keyword id="KW-1003">Cell membrane</keyword>
<keyword id="KW-0963">Cytoplasm</keyword>
<keyword id="KW-0342">GTP-binding</keyword>
<keyword id="KW-0472">Membrane</keyword>
<keyword id="KW-0547">Nucleotide-binding</keyword>
<keyword id="KW-0690">Ribosome biogenesis</keyword>
<keyword id="KW-0694">RNA-binding</keyword>
<keyword id="KW-0699">rRNA-binding</keyword>
<dbReference type="EMBL" id="CP000849">
    <property type="protein sequence ID" value="ABV78669.1"/>
    <property type="molecule type" value="Genomic_DNA"/>
</dbReference>
<dbReference type="RefSeq" id="WP_012151609.1">
    <property type="nucleotide sequence ID" value="NC_009883.1"/>
</dbReference>
<dbReference type="SMR" id="A8GUZ8"/>
<dbReference type="KEGG" id="rbo:A1I_01385"/>
<dbReference type="HOGENOM" id="CLU_038009_1_1_5"/>
<dbReference type="GO" id="GO:0005829">
    <property type="term" value="C:cytosol"/>
    <property type="evidence" value="ECO:0007669"/>
    <property type="project" value="TreeGrafter"/>
</dbReference>
<dbReference type="GO" id="GO:0005886">
    <property type="term" value="C:plasma membrane"/>
    <property type="evidence" value="ECO:0007669"/>
    <property type="project" value="UniProtKB-SubCell"/>
</dbReference>
<dbReference type="GO" id="GO:0005525">
    <property type="term" value="F:GTP binding"/>
    <property type="evidence" value="ECO:0007669"/>
    <property type="project" value="UniProtKB-UniRule"/>
</dbReference>
<dbReference type="GO" id="GO:0003924">
    <property type="term" value="F:GTPase activity"/>
    <property type="evidence" value="ECO:0007669"/>
    <property type="project" value="UniProtKB-UniRule"/>
</dbReference>
<dbReference type="GO" id="GO:0043024">
    <property type="term" value="F:ribosomal small subunit binding"/>
    <property type="evidence" value="ECO:0007669"/>
    <property type="project" value="TreeGrafter"/>
</dbReference>
<dbReference type="GO" id="GO:0070181">
    <property type="term" value="F:small ribosomal subunit rRNA binding"/>
    <property type="evidence" value="ECO:0007669"/>
    <property type="project" value="UniProtKB-UniRule"/>
</dbReference>
<dbReference type="GO" id="GO:0000028">
    <property type="term" value="P:ribosomal small subunit assembly"/>
    <property type="evidence" value="ECO:0007669"/>
    <property type="project" value="TreeGrafter"/>
</dbReference>
<dbReference type="CDD" id="cd04163">
    <property type="entry name" value="Era"/>
    <property type="match status" value="1"/>
</dbReference>
<dbReference type="CDD" id="cd22534">
    <property type="entry name" value="KH-II_Era"/>
    <property type="match status" value="1"/>
</dbReference>
<dbReference type="Gene3D" id="3.30.300.20">
    <property type="match status" value="1"/>
</dbReference>
<dbReference type="Gene3D" id="3.40.50.300">
    <property type="entry name" value="P-loop containing nucleotide triphosphate hydrolases"/>
    <property type="match status" value="1"/>
</dbReference>
<dbReference type="HAMAP" id="MF_00367">
    <property type="entry name" value="GTPase_Era"/>
    <property type="match status" value="1"/>
</dbReference>
<dbReference type="InterPro" id="IPR030388">
    <property type="entry name" value="G_ERA_dom"/>
</dbReference>
<dbReference type="InterPro" id="IPR006073">
    <property type="entry name" value="GTP-bd"/>
</dbReference>
<dbReference type="InterPro" id="IPR005662">
    <property type="entry name" value="GTPase_Era-like"/>
</dbReference>
<dbReference type="InterPro" id="IPR015946">
    <property type="entry name" value="KH_dom-like_a/b"/>
</dbReference>
<dbReference type="InterPro" id="IPR004044">
    <property type="entry name" value="KH_dom_type_2"/>
</dbReference>
<dbReference type="InterPro" id="IPR009019">
    <property type="entry name" value="KH_sf_prok-type"/>
</dbReference>
<dbReference type="InterPro" id="IPR027417">
    <property type="entry name" value="P-loop_NTPase"/>
</dbReference>
<dbReference type="InterPro" id="IPR005225">
    <property type="entry name" value="Small_GTP-bd"/>
</dbReference>
<dbReference type="NCBIfam" id="TIGR00436">
    <property type="entry name" value="era"/>
    <property type="match status" value="1"/>
</dbReference>
<dbReference type="NCBIfam" id="NF000908">
    <property type="entry name" value="PRK00089.1"/>
    <property type="match status" value="1"/>
</dbReference>
<dbReference type="NCBIfam" id="TIGR00231">
    <property type="entry name" value="small_GTP"/>
    <property type="match status" value="1"/>
</dbReference>
<dbReference type="PANTHER" id="PTHR42698">
    <property type="entry name" value="GTPASE ERA"/>
    <property type="match status" value="1"/>
</dbReference>
<dbReference type="PANTHER" id="PTHR42698:SF1">
    <property type="entry name" value="GTPASE ERA, MITOCHONDRIAL"/>
    <property type="match status" value="1"/>
</dbReference>
<dbReference type="Pfam" id="PF07650">
    <property type="entry name" value="KH_2"/>
    <property type="match status" value="1"/>
</dbReference>
<dbReference type="Pfam" id="PF01926">
    <property type="entry name" value="MMR_HSR1"/>
    <property type="match status" value="1"/>
</dbReference>
<dbReference type="SUPFAM" id="SSF52540">
    <property type="entry name" value="P-loop containing nucleoside triphosphate hydrolases"/>
    <property type="match status" value="1"/>
</dbReference>
<dbReference type="SUPFAM" id="SSF54814">
    <property type="entry name" value="Prokaryotic type KH domain (KH-domain type II)"/>
    <property type="match status" value="1"/>
</dbReference>
<dbReference type="PROSITE" id="PS51713">
    <property type="entry name" value="G_ERA"/>
    <property type="match status" value="1"/>
</dbReference>
<dbReference type="PROSITE" id="PS50823">
    <property type="entry name" value="KH_TYPE_2"/>
    <property type="match status" value="1"/>
</dbReference>
<gene>
    <name evidence="1" type="primary">era</name>
    <name type="ordered locus">A1I_01385</name>
</gene>
<feature type="chain" id="PRO_1000079728" description="GTPase Era">
    <location>
        <begin position="1"/>
        <end position="295"/>
    </location>
</feature>
<feature type="domain" description="Era-type G" evidence="2">
    <location>
        <begin position="7"/>
        <end position="176"/>
    </location>
</feature>
<feature type="domain" description="KH type-2" evidence="1">
    <location>
        <begin position="204"/>
        <end position="281"/>
    </location>
</feature>
<feature type="region of interest" description="G1" evidence="2">
    <location>
        <begin position="15"/>
        <end position="22"/>
    </location>
</feature>
<feature type="region of interest" description="G2" evidence="2">
    <location>
        <begin position="41"/>
        <end position="45"/>
    </location>
</feature>
<feature type="region of interest" description="G3" evidence="2">
    <location>
        <begin position="62"/>
        <end position="65"/>
    </location>
</feature>
<feature type="region of interest" description="G4" evidence="2">
    <location>
        <begin position="124"/>
        <end position="127"/>
    </location>
</feature>
<feature type="region of interest" description="G5" evidence="2">
    <location>
        <begin position="152"/>
        <end position="154"/>
    </location>
</feature>
<feature type="binding site" evidence="1">
    <location>
        <begin position="15"/>
        <end position="22"/>
    </location>
    <ligand>
        <name>GTP</name>
        <dbReference type="ChEBI" id="CHEBI:37565"/>
    </ligand>
</feature>
<feature type="binding site" evidence="1">
    <location>
        <begin position="62"/>
        <end position="66"/>
    </location>
    <ligand>
        <name>GTP</name>
        <dbReference type="ChEBI" id="CHEBI:37565"/>
    </ligand>
</feature>
<feature type="binding site" evidence="1">
    <location>
        <begin position="124"/>
        <end position="127"/>
    </location>
    <ligand>
        <name>GTP</name>
        <dbReference type="ChEBI" id="CHEBI:37565"/>
    </ligand>
</feature>
<sequence length="295" mass="33728">MTKQIQKTVSVCIIGRPNSGKSTLLNRIIGEKLSIVTPKVQTTRSIITGIITLNDTQIILYDTPGIFEPKGTLEKAMVRCAWSSLHSADIVMLIIDSLKPLDSITHDILNKLRSLNVVPVFLLNKIDVESKYIDDTKAFLAENYSDSLLFPISAISGENVDKLLEYITSKAKIAPWLYEEDDITDLPMRFIAAEITREQLFLGLQQELPYKLTVQTEKWEELKDKSVKINQIIVVSRESYKTIILGKNGSKIKELGAKSRMQMQQFFGFPVHLFLFVKVRELWEDNSDYYEYMKI</sequence>
<evidence type="ECO:0000255" key="1">
    <source>
        <dbReference type="HAMAP-Rule" id="MF_00367"/>
    </source>
</evidence>
<evidence type="ECO:0000255" key="2">
    <source>
        <dbReference type="PROSITE-ProRule" id="PRU01050"/>
    </source>
</evidence>
<comment type="function">
    <text evidence="1">An essential GTPase that binds both GDP and GTP, with rapid nucleotide exchange. Plays a role in 16S rRNA processing and 30S ribosomal subunit biogenesis and possibly also in cell cycle regulation and energy metabolism.</text>
</comment>
<comment type="subunit">
    <text evidence="1">Monomer.</text>
</comment>
<comment type="subcellular location">
    <subcellularLocation>
        <location>Cytoplasm</location>
    </subcellularLocation>
    <subcellularLocation>
        <location evidence="1">Cell inner membrane</location>
        <topology evidence="1">Peripheral membrane protein</topology>
    </subcellularLocation>
</comment>
<comment type="similarity">
    <text evidence="1 2">Belongs to the TRAFAC class TrmE-Era-EngA-EngB-Septin-like GTPase superfamily. Era GTPase family.</text>
</comment>
<proteinExistence type="inferred from homology"/>
<reference key="1">
    <citation type="submission" date="2007-09" db="EMBL/GenBank/DDBJ databases">
        <title>Complete genome sequencing of Rickettsia bellii.</title>
        <authorList>
            <person name="Madan A."/>
            <person name="Lee H."/>
            <person name="Madan A."/>
            <person name="Yoon J.-G."/>
            <person name="Ryu G.-Y."/>
            <person name="Dasch G."/>
            <person name="Ereemeva M."/>
        </authorList>
    </citation>
    <scope>NUCLEOTIDE SEQUENCE [LARGE SCALE GENOMIC DNA]</scope>
    <source>
        <strain>OSU 85-389</strain>
    </source>
</reference>